<accession>L8EUQ6</accession>
<proteinExistence type="evidence at protein level"/>
<evidence type="ECO:0000269" key="1">
    <source>
    </source>
</evidence>
<evidence type="ECO:0000303" key="2">
    <source>
    </source>
</evidence>
<evidence type="ECO:0000305" key="3"/>
<evidence type="ECO:0000305" key="4">
    <source>
    </source>
</evidence>
<evidence type="ECO:0000312" key="5">
    <source>
        <dbReference type="EMBL" id="ELQ83303.1"/>
    </source>
</evidence>
<evidence type="ECO:0007744" key="6">
    <source>
        <dbReference type="PDB" id="4K2X"/>
    </source>
</evidence>
<evidence type="ECO:0007829" key="7">
    <source>
        <dbReference type="PDB" id="4K2X"/>
    </source>
</evidence>
<name>OXYS_STRR1</name>
<gene>
    <name evidence="5" type="primary">oxyS</name>
    <name evidence="5" type="ORF">SRIM_10936</name>
</gene>
<sequence length="503" mass="54481">MRYDVVIAGAGPTGLMLACELRLAGARTLVLERLAEPVDFSKALGVHARTVELLDMRGLGEGFQAEAPKLRGGNFASLGVPLDFSSFDTRHPYALFVPQVRTEELLTGRALELGAELRRGHAVTALEQDADGVTVSVTGPEGPYEVECAYLVGCDGGGSTVRKLLGIDFPGQDPHMFAVIADARFREELPHGEGMGPMRPYGVMRHDLRAWFAAFPLEPDVYRATVAFFDRPYADRRAPVTEEDVRAALTEVAGSDFGMHDVRWLSRLTDTSRQAERYRDGRVLLAGDACHIHLPAGGQGLNLGFQDAVNLGWKLGATIAGTAPPELLDTYEAERRPIAAGVLRNTRAQAVLIDPDPRYEGLRELMIELLHVPETNRYLAGLISALDVRYPMAGEHPLLGRRVPDLPLVTEDGTRQLSTYFHAARGVLLTLGCDQPLADEAAAWKDRVDLVAAEGVADPGSAVDGLTALLVRPDGYICWTAAPETGTDGLTDALRTWFGPPAM</sequence>
<keyword id="KW-0002">3D-structure</keyword>
<keyword id="KW-0045">Antibiotic biosynthesis</keyword>
<keyword id="KW-0274">FAD</keyword>
<keyword id="KW-0285">Flavoprotein</keyword>
<keyword id="KW-0503">Monooxygenase</keyword>
<keyword id="KW-0521">NADP</keyword>
<keyword id="KW-0547">Nucleotide-binding</keyword>
<keyword id="KW-0560">Oxidoreductase</keyword>
<dbReference type="EC" id="1.14.13.234" evidence="1"/>
<dbReference type="EC" id="1.14.13.38" evidence="1"/>
<dbReference type="EMBL" id="ANSJ01000024">
    <property type="protein sequence ID" value="ELQ83303.1"/>
    <property type="molecule type" value="Genomic_DNA"/>
</dbReference>
<dbReference type="RefSeq" id="WP_003981036.1">
    <property type="nucleotide sequence ID" value="NZ_CP048261.1"/>
</dbReference>
<dbReference type="PDB" id="4K2X">
    <property type="method" value="X-ray"/>
    <property type="resolution" value="2.55 A"/>
    <property type="chains" value="A/B=1-503"/>
</dbReference>
<dbReference type="PDBsum" id="4K2X"/>
<dbReference type="SMR" id="L8EUQ6"/>
<dbReference type="PATRIC" id="fig|1265868.3.peg.2256"/>
<dbReference type="BioCyc" id="MetaCyc:MONOMER-19943"/>
<dbReference type="BRENDA" id="1.14.13.234">
    <property type="organism ID" value="14570"/>
</dbReference>
<dbReference type="UniPathway" id="UPA00926"/>
<dbReference type="EvolutionaryTrace" id="L8EUQ6"/>
<dbReference type="GO" id="GO:0047670">
    <property type="term" value="F:anhydrotetracycline monooxygenase activity"/>
    <property type="evidence" value="ECO:0007669"/>
    <property type="project" value="UniProtKB-EC"/>
</dbReference>
<dbReference type="GO" id="GO:0071949">
    <property type="term" value="F:FAD binding"/>
    <property type="evidence" value="ECO:0007669"/>
    <property type="project" value="InterPro"/>
</dbReference>
<dbReference type="GO" id="GO:0017000">
    <property type="term" value="P:antibiotic biosynthetic process"/>
    <property type="evidence" value="ECO:0007669"/>
    <property type="project" value="UniProtKB-KW"/>
</dbReference>
<dbReference type="Gene3D" id="3.40.30.120">
    <property type="match status" value="1"/>
</dbReference>
<dbReference type="Gene3D" id="3.50.50.60">
    <property type="entry name" value="FAD/NAD(P)-binding domain"/>
    <property type="match status" value="2"/>
</dbReference>
<dbReference type="InterPro" id="IPR002938">
    <property type="entry name" value="FAD-bd"/>
</dbReference>
<dbReference type="InterPro" id="IPR036188">
    <property type="entry name" value="FAD/NAD-bd_sf"/>
</dbReference>
<dbReference type="InterPro" id="IPR050641">
    <property type="entry name" value="RIFMO-like"/>
</dbReference>
<dbReference type="PANTHER" id="PTHR43004:SF19">
    <property type="entry name" value="BINDING MONOOXYGENASE, PUTATIVE (JCVI)-RELATED"/>
    <property type="match status" value="1"/>
</dbReference>
<dbReference type="PANTHER" id="PTHR43004">
    <property type="entry name" value="TRK SYSTEM POTASSIUM UPTAKE PROTEIN"/>
    <property type="match status" value="1"/>
</dbReference>
<dbReference type="Pfam" id="PF01494">
    <property type="entry name" value="FAD_binding_3"/>
    <property type="match status" value="1"/>
</dbReference>
<dbReference type="Pfam" id="PF21274">
    <property type="entry name" value="Rng_hyd_C"/>
    <property type="match status" value="1"/>
</dbReference>
<dbReference type="PRINTS" id="PR00420">
    <property type="entry name" value="RNGMNOXGNASE"/>
</dbReference>
<dbReference type="SUPFAM" id="SSF51905">
    <property type="entry name" value="FAD/NAD(P)-binding domain"/>
    <property type="match status" value="1"/>
</dbReference>
<comment type="function">
    <text evidence="1">Involved in the biosynthesis of the antibiotics oxytetracycline and tetracycline. OxyS starts by catalyzing the stereospecific hydroxylation of anhydrotetracycline at C(6) position to yield 5a,11a-dehydrotetracycline (12-dehydrotetracycline). If the released product is captured by OxyR, it is reduced to tetracycline. However, if the released product is recaptured by OxyS, it performs an additional hydroxylation at C(5), producing 5a,11a-dehydrooxytetracycline, which, following the action of OxyR becomes oxytetracycline.</text>
</comment>
<comment type="catalytic activity">
    <reaction evidence="1">
        <text>5a,11a-dehydrotetracycline + NADPH + O2 + H(+) = 5a,11a-dehydrooxytetracycline + NADP(+) + H2O</text>
        <dbReference type="Rhea" id="RHEA:50388"/>
        <dbReference type="ChEBI" id="CHEBI:15377"/>
        <dbReference type="ChEBI" id="CHEBI:15378"/>
        <dbReference type="ChEBI" id="CHEBI:15379"/>
        <dbReference type="ChEBI" id="CHEBI:57522"/>
        <dbReference type="ChEBI" id="CHEBI:57783"/>
        <dbReference type="ChEBI" id="CHEBI:58349"/>
        <dbReference type="ChEBI" id="CHEBI:133012"/>
        <dbReference type="EC" id="1.14.13.234"/>
    </reaction>
</comment>
<comment type="catalytic activity">
    <reaction evidence="1">
        <text>anhydrotetracycline + NADPH + O2 + H(+) = 5a,11a-dehydrotetracycline + NADP(+) + H2O</text>
        <dbReference type="Rhea" id="RHEA:11976"/>
        <dbReference type="ChEBI" id="CHEBI:15377"/>
        <dbReference type="ChEBI" id="CHEBI:15378"/>
        <dbReference type="ChEBI" id="CHEBI:15379"/>
        <dbReference type="ChEBI" id="CHEBI:57522"/>
        <dbReference type="ChEBI" id="CHEBI:57783"/>
        <dbReference type="ChEBI" id="CHEBI:58032"/>
        <dbReference type="ChEBI" id="CHEBI:58349"/>
        <dbReference type="EC" id="1.14.13.38"/>
    </reaction>
</comment>
<comment type="cofactor">
    <cofactor evidence="1">
        <name>FAD</name>
        <dbReference type="ChEBI" id="CHEBI:57692"/>
    </cofactor>
    <text evidence="1">Binds 1 FAD per subunit.</text>
</comment>
<comment type="pathway">
    <text evidence="4">Antibiotic biosynthesis; oxytetracycline biosynthesis.</text>
</comment>
<comment type="subunit">
    <text evidence="1">Monomer.</text>
</comment>
<comment type="similarity">
    <text evidence="3">Belongs to the PheA/TfdB FAD monooxygenase family.</text>
</comment>
<reference key="1">
    <citation type="journal article" date="2013" name="Genome Announc.">
        <title>Draft genome sequence of the oxytetracycline-producing bacterium Streptomyces rimosus ATCC 10970.</title>
        <authorList>
            <person name="Pethick F.E."/>
            <person name="MacFadyen A.C."/>
            <person name="Tang Z."/>
            <person name="Sangal V."/>
            <person name="Liu T.-T."/>
            <person name="Chu J."/>
            <person name="Kosec G."/>
            <person name="Petkovic H."/>
            <person name="Guo M."/>
            <person name="Kirby R."/>
            <person name="Hoskisson P.A."/>
            <person name="Herron P.R."/>
            <person name="Hunter I.S."/>
        </authorList>
    </citation>
    <scope>NUCLEOTIDE SEQUENCE [LARGE SCALE GENOMIC DNA]</scope>
    <source>
        <strain>ATCC 10970 / DSM 40260 / JCM 4667 / NRRL 2234</strain>
    </source>
</reference>
<reference key="2">
    <citation type="journal article" date="2013" name="J. Am. Chem. Soc.">
        <title>Uncovering the enzymes that catalyze the final steps in oxytetracycline biosynthesis.</title>
        <authorList>
            <person name="Wang P."/>
            <person name="Bashiri G."/>
            <person name="Gao X."/>
            <person name="Sawaya M.R."/>
            <person name="Tang Y."/>
        </authorList>
    </citation>
    <scope>X-RAY CRYSTALLOGRAPHY (2.55 ANGSTROMS) IN COMPLEX WITH FAD</scope>
    <scope>FUNCTION</scope>
    <scope>CATALYTIC ACTIVITY</scope>
    <scope>MUTAGENESIS OF HIS-47 AND PHE-215</scope>
    <scope>COFACTOR</scope>
    <scope>SUBUNIT</scope>
    <scope>PATHWAY</scope>
    <source>
        <strain>ATCC 10970 / DSM 40260 / JCM 4667 / NRRL 2234</strain>
    </source>
</reference>
<organism>
    <name type="scientific">Streptomyces rimosus subsp. rimosus (strain ATCC 10970 / DSM 40260 / JCM 4667 / NRRL 2234)</name>
    <dbReference type="NCBI Taxonomy" id="1265868"/>
    <lineage>
        <taxon>Bacteria</taxon>
        <taxon>Bacillati</taxon>
        <taxon>Actinomycetota</taxon>
        <taxon>Actinomycetes</taxon>
        <taxon>Kitasatosporales</taxon>
        <taxon>Streptomycetaceae</taxon>
        <taxon>Streptomyces</taxon>
    </lineage>
</organism>
<feature type="chain" id="PRO_0000443522" description="12-dehydrotetracycline 5-monooxygenase/anhydrotetracycline 6-monooxygenase">
    <location>
        <begin position="1"/>
        <end position="503"/>
    </location>
</feature>
<feature type="binding site" evidence="1 6">
    <location>
        <position position="13"/>
    </location>
    <ligand>
        <name>FAD</name>
        <dbReference type="ChEBI" id="CHEBI:57692"/>
    </ligand>
</feature>
<feature type="binding site" evidence="1 6">
    <location>
        <begin position="32"/>
        <end position="33"/>
    </location>
    <ligand>
        <name>FAD</name>
        <dbReference type="ChEBI" id="CHEBI:57692"/>
    </ligand>
</feature>
<feature type="binding site" evidence="1 6">
    <location>
        <position position="44"/>
    </location>
    <ligand>
        <name>FAD</name>
        <dbReference type="ChEBI" id="CHEBI:57692"/>
    </ligand>
</feature>
<feature type="binding site" evidence="1 6">
    <location>
        <position position="99"/>
    </location>
    <ligand>
        <name>FAD</name>
        <dbReference type="ChEBI" id="CHEBI:57692"/>
    </ligand>
</feature>
<feature type="binding site" evidence="1 6">
    <location>
        <position position="123"/>
    </location>
    <ligand>
        <name>FAD</name>
        <dbReference type="ChEBI" id="CHEBI:57692"/>
    </ligand>
</feature>
<feature type="binding site" evidence="1 6">
    <location>
        <position position="160"/>
    </location>
    <ligand>
        <name>FAD</name>
        <dbReference type="ChEBI" id="CHEBI:57692"/>
    </ligand>
</feature>
<feature type="binding site" evidence="1 6">
    <location>
        <position position="288"/>
    </location>
    <ligand>
        <name>FAD</name>
        <dbReference type="ChEBI" id="CHEBI:57692"/>
    </ligand>
</feature>
<feature type="binding site" evidence="1 6">
    <location>
        <begin position="301"/>
        <end position="302"/>
    </location>
    <ligand>
        <name>FAD</name>
        <dbReference type="ChEBI" id="CHEBI:57692"/>
    </ligand>
</feature>
<feature type="mutagenesis site" description="Decrease of the ratio between oxytetracycline and tetracycline." evidence="1">
    <original>H</original>
    <variation>A</variation>
    <location>
        <position position="47"/>
    </location>
</feature>
<feature type="mutagenesis site" description="Dramatic change in the product ratio, in which the amount of tetracycline exceeds that of oxytetracycline." evidence="1">
    <original>F</original>
    <variation>I</variation>
    <location>
        <position position="215"/>
    </location>
</feature>
<feature type="strand" evidence="7">
    <location>
        <begin position="4"/>
        <end position="8"/>
    </location>
</feature>
<feature type="helix" evidence="7">
    <location>
        <begin position="12"/>
        <end position="23"/>
    </location>
</feature>
<feature type="strand" evidence="7">
    <location>
        <begin position="28"/>
        <end position="33"/>
    </location>
</feature>
<feature type="helix" evidence="7">
    <location>
        <begin position="48"/>
        <end position="56"/>
    </location>
</feature>
<feature type="helix" evidence="7">
    <location>
        <begin position="60"/>
        <end position="64"/>
    </location>
</feature>
<feature type="strand" evidence="7">
    <location>
        <begin position="87"/>
        <end position="90"/>
    </location>
</feature>
<feature type="strand" evidence="7">
    <location>
        <begin position="93"/>
        <end position="95"/>
    </location>
</feature>
<feature type="helix" evidence="7">
    <location>
        <begin position="99"/>
        <end position="112"/>
    </location>
</feature>
<feature type="strand" evidence="7">
    <location>
        <begin position="116"/>
        <end position="119"/>
    </location>
</feature>
<feature type="strand" evidence="7">
    <location>
        <begin position="122"/>
        <end position="128"/>
    </location>
</feature>
<feature type="strand" evidence="7">
    <location>
        <begin position="133"/>
        <end position="139"/>
    </location>
</feature>
<feature type="strand" evidence="7">
    <location>
        <begin position="142"/>
        <end position="153"/>
    </location>
</feature>
<feature type="helix" evidence="7">
    <location>
        <begin position="160"/>
        <end position="165"/>
    </location>
</feature>
<feature type="strand" evidence="7">
    <location>
        <begin position="175"/>
        <end position="187"/>
    </location>
</feature>
<feature type="strand" evidence="7">
    <location>
        <begin position="201"/>
        <end position="205"/>
    </location>
</feature>
<feature type="turn" evidence="7">
    <location>
        <begin position="206"/>
        <end position="209"/>
    </location>
</feature>
<feature type="strand" evidence="7">
    <location>
        <begin position="210"/>
        <end position="218"/>
    </location>
</feature>
<feature type="strand" evidence="7">
    <location>
        <begin position="221"/>
        <end position="229"/>
    </location>
</feature>
<feature type="helix" evidence="7">
    <location>
        <begin position="242"/>
        <end position="253"/>
    </location>
</feature>
<feature type="strand" evidence="7">
    <location>
        <begin position="259"/>
        <end position="269"/>
    </location>
</feature>
<feature type="strand" evidence="7">
    <location>
        <begin position="272"/>
        <end position="274"/>
    </location>
</feature>
<feature type="strand" evidence="7">
    <location>
        <begin position="278"/>
        <end position="280"/>
    </location>
</feature>
<feature type="strand" evidence="7">
    <location>
        <begin position="283"/>
        <end position="285"/>
    </location>
</feature>
<feature type="helix" evidence="7">
    <location>
        <begin position="287"/>
        <end position="289"/>
    </location>
</feature>
<feature type="helix" evidence="7">
    <location>
        <begin position="300"/>
        <end position="319"/>
    </location>
</feature>
<feature type="turn" evidence="7">
    <location>
        <begin position="325"/>
        <end position="329"/>
    </location>
</feature>
<feature type="helix" evidence="7">
    <location>
        <begin position="330"/>
        <end position="352"/>
    </location>
</feature>
<feature type="helix" evidence="7">
    <location>
        <begin position="357"/>
        <end position="359"/>
    </location>
</feature>
<feature type="helix" evidence="7">
    <location>
        <begin position="360"/>
        <end position="370"/>
    </location>
</feature>
<feature type="helix" evidence="7">
    <location>
        <begin position="373"/>
        <end position="384"/>
    </location>
</feature>
<feature type="strand" evidence="7">
    <location>
        <begin position="393"/>
        <end position="395"/>
    </location>
</feature>
<feature type="turn" evidence="7">
    <location>
        <begin position="397"/>
        <end position="400"/>
    </location>
</feature>
<feature type="strand" evidence="7">
    <location>
        <begin position="407"/>
        <end position="410"/>
    </location>
</feature>
<feature type="strand" evidence="7">
    <location>
        <begin position="413"/>
        <end position="416"/>
    </location>
</feature>
<feature type="helix" evidence="7">
    <location>
        <begin position="417"/>
        <end position="420"/>
    </location>
</feature>
<feature type="strand" evidence="7">
    <location>
        <begin position="426"/>
        <end position="433"/>
    </location>
</feature>
<feature type="helix" evidence="7">
    <location>
        <begin position="436"/>
        <end position="441"/>
    </location>
</feature>
<feature type="helix" evidence="7">
    <location>
        <begin position="442"/>
        <end position="444"/>
    </location>
</feature>
<feature type="turn" evidence="7">
    <location>
        <begin position="445"/>
        <end position="447"/>
    </location>
</feature>
<feature type="strand" evidence="7">
    <location>
        <begin position="448"/>
        <end position="457"/>
    </location>
</feature>
<feature type="turn" evidence="7">
    <location>
        <begin position="462"/>
        <end position="465"/>
    </location>
</feature>
<feature type="strand" evidence="7">
    <location>
        <begin position="467"/>
        <end position="471"/>
    </location>
</feature>
<feature type="strand" evidence="7">
    <location>
        <begin position="475"/>
        <end position="481"/>
    </location>
</feature>
<feature type="turn" evidence="7">
    <location>
        <begin position="483"/>
        <end position="485"/>
    </location>
</feature>
<feature type="helix" evidence="7">
    <location>
        <begin position="490"/>
        <end position="498"/>
    </location>
</feature>
<protein>
    <recommendedName>
        <fullName evidence="2">12-dehydrotetracycline 5-monooxygenase/anhydrotetracycline 6-monooxygenase</fullName>
        <ecNumber evidence="1">1.14.13.234</ecNumber>
        <ecNumber evidence="1">1.14.13.38</ecNumber>
    </recommendedName>
</protein>